<keyword id="KW-0021">Allosteric enzyme</keyword>
<keyword id="KW-0067">ATP-binding</keyword>
<keyword id="KW-0963">Cytoplasm</keyword>
<keyword id="KW-0324">Glycolysis</keyword>
<keyword id="KW-0418">Kinase</keyword>
<keyword id="KW-0460">Magnesium</keyword>
<keyword id="KW-0479">Metal-binding</keyword>
<keyword id="KW-0547">Nucleotide-binding</keyword>
<keyword id="KW-0597">Phosphoprotein</keyword>
<keyword id="KW-1185">Reference proteome</keyword>
<keyword id="KW-0808">Transferase</keyword>
<evidence type="ECO:0000255" key="1">
    <source>
        <dbReference type="HAMAP-Rule" id="MF_03186"/>
    </source>
</evidence>
<evidence type="ECO:0000269" key="2">
    <source>
    </source>
</evidence>
<evidence type="ECO:0000305" key="3"/>
<evidence type="ECO:0007744" key="4">
    <source>
    </source>
</evidence>
<proteinExistence type="evidence at protein level"/>
<name>PFKA1_ARATH</name>
<dbReference type="EC" id="2.7.1.11" evidence="1"/>
<dbReference type="EMBL" id="AL161574">
    <property type="protein sequence ID" value="CAB79680.1"/>
    <property type="molecule type" value="Genomic_DNA"/>
</dbReference>
<dbReference type="EMBL" id="CP002687">
    <property type="protein sequence ID" value="AEE85604.1"/>
    <property type="molecule type" value="Genomic_DNA"/>
</dbReference>
<dbReference type="EMBL" id="AY128388">
    <property type="protein sequence ID" value="AAM91591.1"/>
    <property type="molecule type" value="mRNA"/>
</dbReference>
<dbReference type="EMBL" id="BT015793">
    <property type="protein sequence ID" value="AAU90083.1"/>
    <property type="molecule type" value="mRNA"/>
</dbReference>
<dbReference type="PIR" id="T13433">
    <property type="entry name" value="T13433"/>
</dbReference>
<dbReference type="RefSeq" id="NP_194651.1">
    <property type="nucleotide sequence ID" value="NM_119066.3"/>
</dbReference>
<dbReference type="SMR" id="Q9M0F9"/>
<dbReference type="BioGRID" id="14330">
    <property type="interactions" value="4"/>
</dbReference>
<dbReference type="FunCoup" id="Q9M0F9">
    <property type="interactions" value="669"/>
</dbReference>
<dbReference type="IntAct" id="Q9M0F9">
    <property type="interactions" value="3"/>
</dbReference>
<dbReference type="STRING" id="3702.Q9M0F9"/>
<dbReference type="iPTMnet" id="Q9M0F9"/>
<dbReference type="PaxDb" id="3702-AT4G29220.1"/>
<dbReference type="ProteomicsDB" id="236705"/>
<dbReference type="DNASU" id="829043"/>
<dbReference type="EnsemblPlants" id="AT4G29220.1">
    <property type="protein sequence ID" value="AT4G29220.1"/>
    <property type="gene ID" value="AT4G29220"/>
</dbReference>
<dbReference type="GeneID" id="829043"/>
<dbReference type="Gramene" id="AT4G29220.1">
    <property type="protein sequence ID" value="AT4G29220.1"/>
    <property type="gene ID" value="AT4G29220"/>
</dbReference>
<dbReference type="KEGG" id="ath:AT4G29220"/>
<dbReference type="Araport" id="AT4G29220"/>
<dbReference type="TAIR" id="AT4G29220">
    <property type="gene designation" value="PFK1"/>
</dbReference>
<dbReference type="eggNOG" id="KOG2440">
    <property type="taxonomic scope" value="Eukaryota"/>
</dbReference>
<dbReference type="HOGENOM" id="CLU_020655_7_2_1"/>
<dbReference type="InParanoid" id="Q9M0F9"/>
<dbReference type="OMA" id="HDDIHEP"/>
<dbReference type="OrthoDB" id="537915at2759"/>
<dbReference type="PhylomeDB" id="Q9M0F9"/>
<dbReference type="BioCyc" id="ARA:AT4G29220-MONOMER"/>
<dbReference type="BRENDA" id="2.7.1.11">
    <property type="organism ID" value="399"/>
</dbReference>
<dbReference type="UniPathway" id="UPA00109">
    <property type="reaction ID" value="UER00182"/>
</dbReference>
<dbReference type="PRO" id="PR:Q9M0F9"/>
<dbReference type="Proteomes" id="UP000006548">
    <property type="component" value="Chromosome 4"/>
</dbReference>
<dbReference type="ExpressionAtlas" id="Q9M0F9">
    <property type="expression patterns" value="baseline and differential"/>
</dbReference>
<dbReference type="GO" id="GO:0005829">
    <property type="term" value="C:cytosol"/>
    <property type="evidence" value="ECO:0000314"/>
    <property type="project" value="TAIR"/>
</dbReference>
<dbReference type="GO" id="GO:0005886">
    <property type="term" value="C:plasma membrane"/>
    <property type="evidence" value="ECO:0000314"/>
    <property type="project" value="TAIR"/>
</dbReference>
<dbReference type="GO" id="GO:0003872">
    <property type="term" value="F:6-phosphofructokinase activity"/>
    <property type="evidence" value="ECO:0000314"/>
    <property type="project" value="TAIR"/>
</dbReference>
<dbReference type="GO" id="GO:0005524">
    <property type="term" value="F:ATP binding"/>
    <property type="evidence" value="ECO:0007669"/>
    <property type="project" value="UniProtKB-KW"/>
</dbReference>
<dbReference type="GO" id="GO:0046872">
    <property type="term" value="F:metal ion binding"/>
    <property type="evidence" value="ECO:0007669"/>
    <property type="project" value="UniProtKB-KW"/>
</dbReference>
<dbReference type="GO" id="GO:0006002">
    <property type="term" value="P:fructose 6-phosphate metabolic process"/>
    <property type="evidence" value="ECO:0007669"/>
    <property type="project" value="InterPro"/>
</dbReference>
<dbReference type="GO" id="GO:0006096">
    <property type="term" value="P:glycolytic process"/>
    <property type="evidence" value="ECO:0000314"/>
    <property type="project" value="TAIR"/>
</dbReference>
<dbReference type="FunFam" id="3.40.50.450:FF:000002">
    <property type="entry name" value="ATP-dependent 6-phosphofructokinase"/>
    <property type="match status" value="1"/>
</dbReference>
<dbReference type="FunFam" id="3.40.50.460:FF:000018">
    <property type="entry name" value="Phosphofructokinase"/>
    <property type="match status" value="1"/>
</dbReference>
<dbReference type="Gene3D" id="3.40.50.450">
    <property type="match status" value="1"/>
</dbReference>
<dbReference type="HAMAP" id="MF_01981">
    <property type="entry name" value="Phosphofructokinase_II_X"/>
    <property type="match status" value="1"/>
</dbReference>
<dbReference type="InterPro" id="IPR022953">
    <property type="entry name" value="ATP_PFK"/>
</dbReference>
<dbReference type="InterPro" id="IPR050929">
    <property type="entry name" value="PFKA"/>
</dbReference>
<dbReference type="InterPro" id="IPR000023">
    <property type="entry name" value="Phosphofructokinase_dom"/>
</dbReference>
<dbReference type="InterPro" id="IPR035966">
    <property type="entry name" value="PKF_sf"/>
</dbReference>
<dbReference type="InterPro" id="IPR012004">
    <property type="entry name" value="PyroP-dep_PFK_TP0108"/>
</dbReference>
<dbReference type="NCBIfam" id="NF005301">
    <property type="entry name" value="PRK06830.1"/>
    <property type="match status" value="1"/>
</dbReference>
<dbReference type="PANTHER" id="PTHR45770">
    <property type="entry name" value="ATP-DEPENDENT 6-PHOSPHOFRUCTOKINASE 1"/>
    <property type="match status" value="1"/>
</dbReference>
<dbReference type="Pfam" id="PF00365">
    <property type="entry name" value="PFK"/>
    <property type="match status" value="1"/>
</dbReference>
<dbReference type="PIRSF" id="PIRSF000534">
    <property type="entry name" value="PPi_PFK_TP0108"/>
    <property type="match status" value="1"/>
</dbReference>
<dbReference type="PRINTS" id="PR00476">
    <property type="entry name" value="PHFRCTKINASE"/>
</dbReference>
<dbReference type="SUPFAM" id="SSF53784">
    <property type="entry name" value="Phosphofructokinase"/>
    <property type="match status" value="1"/>
</dbReference>
<feature type="chain" id="PRO_0000330768" description="ATP-dependent 6-phosphofructokinase 1">
    <location>
        <begin position="1"/>
        <end position="473"/>
    </location>
</feature>
<feature type="active site" description="Proton acceptor" evidence="1">
    <location>
        <position position="221"/>
    </location>
</feature>
<feature type="binding site" evidence="1">
    <location>
        <position position="102"/>
    </location>
    <ligand>
        <name>ATP</name>
        <dbReference type="ChEBI" id="CHEBI:30616"/>
    </ligand>
</feature>
<feature type="binding site" evidence="1">
    <location>
        <begin position="165"/>
        <end position="166"/>
    </location>
    <ligand>
        <name>ATP</name>
        <dbReference type="ChEBI" id="CHEBI:30616"/>
    </ligand>
</feature>
<feature type="binding site" evidence="1">
    <location>
        <begin position="190"/>
        <end position="193"/>
    </location>
    <ligand>
        <name>ATP</name>
        <dbReference type="ChEBI" id="CHEBI:30616"/>
    </ligand>
</feature>
<feature type="binding site" evidence="1">
    <location>
        <position position="191"/>
    </location>
    <ligand>
        <name>Mg(2+)</name>
        <dbReference type="ChEBI" id="CHEBI:18420"/>
        <note>catalytic</note>
    </ligand>
</feature>
<feature type="binding site" evidence="1">
    <location>
        <begin position="219"/>
        <end position="221"/>
    </location>
    <ligand>
        <name>substrate</name>
    </ligand>
</feature>
<feature type="binding site" evidence="1">
    <location>
        <begin position="264"/>
        <end position="266"/>
    </location>
    <ligand>
        <name>substrate</name>
    </ligand>
</feature>
<feature type="binding site" evidence="1">
    <location>
        <position position="320"/>
    </location>
    <ligand>
        <name>substrate</name>
    </ligand>
</feature>
<feature type="binding site" evidence="1">
    <location>
        <begin position="376"/>
        <end position="379"/>
    </location>
    <ligand>
        <name>substrate</name>
    </ligand>
</feature>
<feature type="site" description="Important for substrate specificity; cannot use PPi as phosphoryl donor" evidence="1">
    <location>
        <position position="192"/>
    </location>
</feature>
<feature type="modified residue" description="Phosphoserine" evidence="4">
    <location>
        <position position="71"/>
    </location>
</feature>
<feature type="sequence conflict" description="In Ref. 3; AAM91591." evidence="3" ref="3">
    <original>M</original>
    <variation>V</variation>
    <location>
        <position position="403"/>
    </location>
</feature>
<reference key="1">
    <citation type="journal article" date="1999" name="Nature">
        <title>Sequence and analysis of chromosome 4 of the plant Arabidopsis thaliana.</title>
        <authorList>
            <person name="Mayer K.F.X."/>
            <person name="Schueller C."/>
            <person name="Wambutt R."/>
            <person name="Murphy G."/>
            <person name="Volckaert G."/>
            <person name="Pohl T."/>
            <person name="Duesterhoeft A."/>
            <person name="Stiekema W."/>
            <person name="Entian K.-D."/>
            <person name="Terryn N."/>
            <person name="Harris B."/>
            <person name="Ansorge W."/>
            <person name="Brandt P."/>
            <person name="Grivell L.A."/>
            <person name="Rieger M."/>
            <person name="Weichselgartner M."/>
            <person name="de Simone V."/>
            <person name="Obermaier B."/>
            <person name="Mache R."/>
            <person name="Mueller M."/>
            <person name="Kreis M."/>
            <person name="Delseny M."/>
            <person name="Puigdomenech P."/>
            <person name="Watson M."/>
            <person name="Schmidtheini T."/>
            <person name="Reichert B."/>
            <person name="Portetelle D."/>
            <person name="Perez-Alonso M."/>
            <person name="Boutry M."/>
            <person name="Bancroft I."/>
            <person name="Vos P."/>
            <person name="Hoheisel J."/>
            <person name="Zimmermann W."/>
            <person name="Wedler H."/>
            <person name="Ridley P."/>
            <person name="Langham S.-A."/>
            <person name="McCullagh B."/>
            <person name="Bilham L."/>
            <person name="Robben J."/>
            <person name="van der Schueren J."/>
            <person name="Grymonprez B."/>
            <person name="Chuang Y.-J."/>
            <person name="Vandenbussche F."/>
            <person name="Braeken M."/>
            <person name="Weltjens I."/>
            <person name="Voet M."/>
            <person name="Bastiaens I."/>
            <person name="Aert R."/>
            <person name="Defoor E."/>
            <person name="Weitzenegger T."/>
            <person name="Bothe G."/>
            <person name="Ramsperger U."/>
            <person name="Hilbert H."/>
            <person name="Braun M."/>
            <person name="Holzer E."/>
            <person name="Brandt A."/>
            <person name="Peters S."/>
            <person name="van Staveren M."/>
            <person name="Dirkse W."/>
            <person name="Mooijman P."/>
            <person name="Klein Lankhorst R."/>
            <person name="Rose M."/>
            <person name="Hauf J."/>
            <person name="Koetter P."/>
            <person name="Berneiser S."/>
            <person name="Hempel S."/>
            <person name="Feldpausch M."/>
            <person name="Lamberth S."/>
            <person name="Van den Daele H."/>
            <person name="De Keyser A."/>
            <person name="Buysshaert C."/>
            <person name="Gielen J."/>
            <person name="Villarroel R."/>
            <person name="De Clercq R."/>
            <person name="van Montagu M."/>
            <person name="Rogers J."/>
            <person name="Cronin A."/>
            <person name="Quail M.A."/>
            <person name="Bray-Allen S."/>
            <person name="Clark L."/>
            <person name="Doggett J."/>
            <person name="Hall S."/>
            <person name="Kay M."/>
            <person name="Lennard N."/>
            <person name="McLay K."/>
            <person name="Mayes R."/>
            <person name="Pettett A."/>
            <person name="Rajandream M.A."/>
            <person name="Lyne M."/>
            <person name="Benes V."/>
            <person name="Rechmann S."/>
            <person name="Borkova D."/>
            <person name="Bloecker H."/>
            <person name="Scharfe M."/>
            <person name="Grimm M."/>
            <person name="Loehnert T.-H."/>
            <person name="Dose S."/>
            <person name="de Haan M."/>
            <person name="Maarse A.C."/>
            <person name="Schaefer M."/>
            <person name="Mueller-Auer S."/>
            <person name="Gabel C."/>
            <person name="Fuchs M."/>
            <person name="Fartmann B."/>
            <person name="Granderath K."/>
            <person name="Dauner D."/>
            <person name="Herzl A."/>
            <person name="Neumann S."/>
            <person name="Argiriou A."/>
            <person name="Vitale D."/>
            <person name="Liguori R."/>
            <person name="Piravandi E."/>
            <person name="Massenet O."/>
            <person name="Quigley F."/>
            <person name="Clabauld G."/>
            <person name="Muendlein A."/>
            <person name="Felber R."/>
            <person name="Schnabl S."/>
            <person name="Hiller R."/>
            <person name="Schmidt W."/>
            <person name="Lecharny A."/>
            <person name="Aubourg S."/>
            <person name="Chefdor F."/>
            <person name="Cooke R."/>
            <person name="Berger C."/>
            <person name="Monfort A."/>
            <person name="Casacuberta E."/>
            <person name="Gibbons T."/>
            <person name="Weber N."/>
            <person name="Vandenbol M."/>
            <person name="Bargues M."/>
            <person name="Terol J."/>
            <person name="Torres A."/>
            <person name="Perez-Perez A."/>
            <person name="Purnelle B."/>
            <person name="Bent E."/>
            <person name="Johnson S."/>
            <person name="Tacon D."/>
            <person name="Jesse T."/>
            <person name="Heijnen L."/>
            <person name="Schwarz S."/>
            <person name="Scholler P."/>
            <person name="Heber S."/>
            <person name="Francs P."/>
            <person name="Bielke C."/>
            <person name="Frishman D."/>
            <person name="Haase D."/>
            <person name="Lemcke K."/>
            <person name="Mewes H.-W."/>
            <person name="Stocker S."/>
            <person name="Zaccaria P."/>
            <person name="Bevan M."/>
            <person name="Wilson R.K."/>
            <person name="de la Bastide M."/>
            <person name="Habermann K."/>
            <person name="Parnell L."/>
            <person name="Dedhia N."/>
            <person name="Gnoj L."/>
            <person name="Schutz K."/>
            <person name="Huang E."/>
            <person name="Spiegel L."/>
            <person name="Sekhon M."/>
            <person name="Murray J."/>
            <person name="Sheet P."/>
            <person name="Cordes M."/>
            <person name="Abu-Threideh J."/>
            <person name="Stoneking T."/>
            <person name="Kalicki J."/>
            <person name="Graves T."/>
            <person name="Harmon G."/>
            <person name="Edwards J."/>
            <person name="Latreille P."/>
            <person name="Courtney L."/>
            <person name="Cloud J."/>
            <person name="Abbott A."/>
            <person name="Scott K."/>
            <person name="Johnson D."/>
            <person name="Minx P."/>
            <person name="Bentley D."/>
            <person name="Fulton B."/>
            <person name="Miller N."/>
            <person name="Greco T."/>
            <person name="Kemp K."/>
            <person name="Kramer J."/>
            <person name="Fulton L."/>
            <person name="Mardis E."/>
            <person name="Dante M."/>
            <person name="Pepin K."/>
            <person name="Hillier L.W."/>
            <person name="Nelson J."/>
            <person name="Spieth J."/>
            <person name="Ryan E."/>
            <person name="Andrews S."/>
            <person name="Geisel C."/>
            <person name="Layman D."/>
            <person name="Du H."/>
            <person name="Ali J."/>
            <person name="Berghoff A."/>
            <person name="Jones K."/>
            <person name="Drone K."/>
            <person name="Cotton M."/>
            <person name="Joshu C."/>
            <person name="Antonoiu B."/>
            <person name="Zidanic M."/>
            <person name="Strong C."/>
            <person name="Sun H."/>
            <person name="Lamar B."/>
            <person name="Yordan C."/>
            <person name="Ma P."/>
            <person name="Zhong J."/>
            <person name="Preston R."/>
            <person name="Vil D."/>
            <person name="Shekher M."/>
            <person name="Matero A."/>
            <person name="Shah R."/>
            <person name="Swaby I.K."/>
            <person name="O'Shaughnessy A."/>
            <person name="Rodriguez M."/>
            <person name="Hoffman J."/>
            <person name="Till S."/>
            <person name="Granat S."/>
            <person name="Shohdy N."/>
            <person name="Hasegawa A."/>
            <person name="Hameed A."/>
            <person name="Lodhi M."/>
            <person name="Johnson A."/>
            <person name="Chen E."/>
            <person name="Marra M.A."/>
            <person name="Martienssen R."/>
            <person name="McCombie W.R."/>
        </authorList>
    </citation>
    <scope>NUCLEOTIDE SEQUENCE [LARGE SCALE GENOMIC DNA]</scope>
    <source>
        <strain>cv. Columbia</strain>
    </source>
</reference>
<reference key="2">
    <citation type="journal article" date="2017" name="Plant J.">
        <title>Araport11: a complete reannotation of the Arabidopsis thaliana reference genome.</title>
        <authorList>
            <person name="Cheng C.Y."/>
            <person name="Krishnakumar V."/>
            <person name="Chan A.P."/>
            <person name="Thibaud-Nissen F."/>
            <person name="Schobel S."/>
            <person name="Town C.D."/>
        </authorList>
    </citation>
    <scope>GENOME REANNOTATION</scope>
    <source>
        <strain>cv. Columbia</strain>
    </source>
</reference>
<reference key="3">
    <citation type="journal article" date="2003" name="Science">
        <title>Empirical analysis of transcriptional activity in the Arabidopsis genome.</title>
        <authorList>
            <person name="Yamada K."/>
            <person name="Lim J."/>
            <person name="Dale J.M."/>
            <person name="Chen H."/>
            <person name="Shinn P."/>
            <person name="Palm C.J."/>
            <person name="Southwick A.M."/>
            <person name="Wu H.C."/>
            <person name="Kim C.J."/>
            <person name="Nguyen M."/>
            <person name="Pham P.K."/>
            <person name="Cheuk R.F."/>
            <person name="Karlin-Newmann G."/>
            <person name="Liu S.X."/>
            <person name="Lam B."/>
            <person name="Sakano H."/>
            <person name="Wu T."/>
            <person name="Yu G."/>
            <person name="Miranda M."/>
            <person name="Quach H.L."/>
            <person name="Tripp M."/>
            <person name="Chang C.H."/>
            <person name="Lee J.M."/>
            <person name="Toriumi M.J."/>
            <person name="Chan M.M."/>
            <person name="Tang C.C."/>
            <person name="Onodera C.S."/>
            <person name="Deng J.M."/>
            <person name="Akiyama K."/>
            <person name="Ansari Y."/>
            <person name="Arakawa T."/>
            <person name="Banh J."/>
            <person name="Banno F."/>
            <person name="Bowser L."/>
            <person name="Brooks S.Y."/>
            <person name="Carninci P."/>
            <person name="Chao Q."/>
            <person name="Choy N."/>
            <person name="Enju A."/>
            <person name="Goldsmith A.D."/>
            <person name="Gurjal M."/>
            <person name="Hansen N.F."/>
            <person name="Hayashizaki Y."/>
            <person name="Johnson-Hopson C."/>
            <person name="Hsuan V.W."/>
            <person name="Iida K."/>
            <person name="Karnes M."/>
            <person name="Khan S."/>
            <person name="Koesema E."/>
            <person name="Ishida J."/>
            <person name="Jiang P.X."/>
            <person name="Jones T."/>
            <person name="Kawai J."/>
            <person name="Kamiya A."/>
            <person name="Meyers C."/>
            <person name="Nakajima M."/>
            <person name="Narusaka M."/>
            <person name="Seki M."/>
            <person name="Sakurai T."/>
            <person name="Satou M."/>
            <person name="Tamse R."/>
            <person name="Vaysberg M."/>
            <person name="Wallender E.K."/>
            <person name="Wong C."/>
            <person name="Yamamura Y."/>
            <person name="Yuan S."/>
            <person name="Shinozaki K."/>
            <person name="Davis R.W."/>
            <person name="Theologis A."/>
            <person name="Ecker J.R."/>
        </authorList>
    </citation>
    <scope>NUCLEOTIDE SEQUENCE [LARGE SCALE MRNA]</scope>
    <source>
        <strain>cv. Columbia</strain>
    </source>
</reference>
<reference key="4">
    <citation type="submission" date="2004-10" db="EMBL/GenBank/DDBJ databases">
        <title>Arabidopsis ORF clones.</title>
        <authorList>
            <person name="Shinn P."/>
            <person name="Chen H."/>
            <person name="Cheuk R.F."/>
            <person name="Kim C.J."/>
            <person name="Ecker J.R."/>
        </authorList>
    </citation>
    <scope>NUCLEOTIDE SEQUENCE [LARGE SCALE MRNA]</scope>
    <source>
        <strain>cv. Columbia</strain>
    </source>
</reference>
<reference key="5">
    <citation type="journal article" date="2007" name="FEBS Lett.">
        <title>Characterisation of the ATP-dependent phosphofructokinase gene family from Arabidopsis thaliana.</title>
        <authorList>
            <person name="Mustroph A."/>
            <person name="Sonnewald U."/>
            <person name="Biemelt S."/>
        </authorList>
    </citation>
    <scope>CATALYTIC ACTIVITY</scope>
    <scope>TISSUE SPECIFICITY</scope>
    <scope>SUBCELLULAR LOCATION</scope>
    <scope>GENE FAMILY</scope>
    <scope>NOMENCLATURE</scope>
</reference>
<reference key="6">
    <citation type="journal article" date="2009" name="Plant Physiol.">
        <title>Large-scale Arabidopsis phosphoproteome profiling reveals novel chloroplast kinase substrates and phosphorylation networks.</title>
        <authorList>
            <person name="Reiland S."/>
            <person name="Messerli G."/>
            <person name="Baerenfaller K."/>
            <person name="Gerrits B."/>
            <person name="Endler A."/>
            <person name="Grossmann J."/>
            <person name="Gruissem W."/>
            <person name="Baginsky S."/>
        </authorList>
    </citation>
    <scope>PHOSPHORYLATION [LARGE SCALE ANALYSIS] AT SER-71</scope>
    <scope>IDENTIFICATION BY MASS SPECTROMETRY [LARGE SCALE ANALYSIS]</scope>
</reference>
<comment type="function">
    <text evidence="1">Catalyzes the phosphorylation of D-fructose 6-phosphate to fructose 1,6-bisphosphate by ATP, the first committing step of glycolysis.</text>
</comment>
<comment type="catalytic activity">
    <reaction evidence="1 2">
        <text>beta-D-fructose 6-phosphate + ATP = beta-D-fructose 1,6-bisphosphate + ADP + H(+)</text>
        <dbReference type="Rhea" id="RHEA:16109"/>
        <dbReference type="ChEBI" id="CHEBI:15378"/>
        <dbReference type="ChEBI" id="CHEBI:30616"/>
        <dbReference type="ChEBI" id="CHEBI:32966"/>
        <dbReference type="ChEBI" id="CHEBI:57634"/>
        <dbReference type="ChEBI" id="CHEBI:456216"/>
        <dbReference type="EC" id="2.7.1.11"/>
    </reaction>
</comment>
<comment type="cofactor">
    <cofactor evidence="1">
        <name>Mg(2+)</name>
        <dbReference type="ChEBI" id="CHEBI:18420"/>
    </cofactor>
</comment>
<comment type="activity regulation">
    <text evidence="1">Allosterically activated by AMP.</text>
</comment>
<comment type="pathway">
    <text evidence="1">Carbohydrate degradation; glycolysis; D-glyceraldehyde 3-phosphate and glycerone phosphate from D-glucose: step 3/4.</text>
</comment>
<comment type="subunit">
    <text evidence="1">Homotetramer.</text>
</comment>
<comment type="subcellular location">
    <subcellularLocation>
        <location evidence="1 2">Cytoplasm</location>
    </subcellularLocation>
    <text>May be associated with the plasma membrane.</text>
</comment>
<comment type="tissue specificity">
    <text evidence="2">Expressed in roots, leaves, stems and flowers.</text>
</comment>
<comment type="similarity">
    <text evidence="1">Belongs to the phosphofructokinase type A (PFKA) family. PPi-dependent PFK group II subfamily. Atypical ATP-dependent clade 'X' sub-subfamily.</text>
</comment>
<sequence>MSSSVPNSDRKIVTGPAGYILEDVPHFSDDFPDHPTYPNPLQDNAAYSVVKQYFVDEDDTVPQKIVVHPDSPRGTHFRRAGPRQRVYFESDDVLACIVTCGGLCPGLNTVIREIVCGLSYMYGVKRILGIDGGYRGFYARNTIHLDLKTVNDIHRSGGTILGTSRGGHNTTKIVDSIQDRGINQVYIIGGDGSQKGAAAIFEEIRKRKLKVAVAGIPKTIDNDIPIIDRSFGFDTAVEEAQRAINAAHVEATSFENGIGLVKLMGRYSGFIAMHATLASRDVDCCLIPESPFFLEGSGGLFEFIDKRLKESGHMVIVIAEGAGQDLLSESMKESTTLKDASGNKLLQDIGLWISQRIKDHFAKKMTLTLKYIDPTYMIRAVPSNASDNVCCTLLAQSAVHGVMAGYNGFTVGLVNGRHTYIPFNRITEKQNKVVITDRMWARLLSSTNQPSFMKQADKIHSNQLVGEPGTMKW</sequence>
<gene>
    <name evidence="1" type="primary">PFK1</name>
    <name type="ordered locus">At4g29220</name>
    <name type="ORF">F17A13.40</name>
</gene>
<protein>
    <recommendedName>
        <fullName evidence="1">ATP-dependent 6-phosphofructokinase 1</fullName>
        <shortName evidence="1">ATP-PFK 1</shortName>
        <shortName evidence="1">Phosphofructokinase 1</shortName>
        <ecNumber evidence="1">2.7.1.11</ecNumber>
    </recommendedName>
    <alternativeName>
        <fullName evidence="1">Phosphohexokinase 1</fullName>
    </alternativeName>
</protein>
<organism>
    <name type="scientific">Arabidopsis thaliana</name>
    <name type="common">Mouse-ear cress</name>
    <dbReference type="NCBI Taxonomy" id="3702"/>
    <lineage>
        <taxon>Eukaryota</taxon>
        <taxon>Viridiplantae</taxon>
        <taxon>Streptophyta</taxon>
        <taxon>Embryophyta</taxon>
        <taxon>Tracheophyta</taxon>
        <taxon>Spermatophyta</taxon>
        <taxon>Magnoliopsida</taxon>
        <taxon>eudicotyledons</taxon>
        <taxon>Gunneridae</taxon>
        <taxon>Pentapetalae</taxon>
        <taxon>rosids</taxon>
        <taxon>malvids</taxon>
        <taxon>Brassicales</taxon>
        <taxon>Brassicaceae</taxon>
        <taxon>Camelineae</taxon>
        <taxon>Arabidopsis</taxon>
    </lineage>
</organism>
<accession>Q9M0F9</accession>
<accession>Q8L7L4</accession>